<evidence type="ECO:0000255" key="1">
    <source>
        <dbReference type="HAMAP-Rule" id="MF_01389"/>
    </source>
</evidence>
<proteinExistence type="inferred from homology"/>
<gene>
    <name evidence="1" type="primary">ureG1</name>
    <name type="ordered locus">Mext_3013</name>
</gene>
<keyword id="KW-0143">Chaperone</keyword>
<keyword id="KW-0963">Cytoplasm</keyword>
<keyword id="KW-0342">GTP-binding</keyword>
<keyword id="KW-0996">Nickel insertion</keyword>
<keyword id="KW-0547">Nucleotide-binding</keyword>
<protein>
    <recommendedName>
        <fullName evidence="1">Urease accessory protein UreG 1</fullName>
    </recommendedName>
</protein>
<organism>
    <name type="scientific">Methylorubrum extorquens (strain PA1)</name>
    <name type="common">Methylobacterium extorquens</name>
    <dbReference type="NCBI Taxonomy" id="419610"/>
    <lineage>
        <taxon>Bacteria</taxon>
        <taxon>Pseudomonadati</taxon>
        <taxon>Pseudomonadota</taxon>
        <taxon>Alphaproteobacteria</taxon>
        <taxon>Hyphomicrobiales</taxon>
        <taxon>Methylobacteriaceae</taxon>
        <taxon>Methylorubrum</taxon>
    </lineage>
</organism>
<feature type="chain" id="PRO_0000347402" description="Urease accessory protein UreG 1">
    <location>
        <begin position="1"/>
        <end position="204"/>
    </location>
</feature>
<feature type="binding site" evidence="1">
    <location>
        <begin position="14"/>
        <end position="21"/>
    </location>
    <ligand>
        <name>GTP</name>
        <dbReference type="ChEBI" id="CHEBI:37565"/>
    </ligand>
</feature>
<accession>A9W6X0</accession>
<reference key="1">
    <citation type="submission" date="2007-12" db="EMBL/GenBank/DDBJ databases">
        <title>Complete sequence of Methylobacterium extorquens PA1.</title>
        <authorList>
            <consortium name="US DOE Joint Genome Institute"/>
            <person name="Copeland A."/>
            <person name="Lucas S."/>
            <person name="Lapidus A."/>
            <person name="Barry K."/>
            <person name="Glavina del Rio T."/>
            <person name="Dalin E."/>
            <person name="Tice H."/>
            <person name="Pitluck S."/>
            <person name="Saunders E."/>
            <person name="Brettin T."/>
            <person name="Bruce D."/>
            <person name="Detter J.C."/>
            <person name="Han C."/>
            <person name="Schmutz J."/>
            <person name="Larimer F."/>
            <person name="Land M."/>
            <person name="Hauser L."/>
            <person name="Kyrpides N."/>
            <person name="Kim E."/>
            <person name="Marx C."/>
            <person name="Richardson P."/>
        </authorList>
    </citation>
    <scope>NUCLEOTIDE SEQUENCE [LARGE SCALE GENOMIC DNA]</scope>
    <source>
        <strain>PA1</strain>
    </source>
</reference>
<sequence length="204" mass="21651">MASVNGPLRVGIGGPVGSGKTALMEQLCRRFRDSYEICAITNDIYTKEDARILTVAGALPEERILGVETGGCPHTAIREDASINLAAVAEMRRRFPKLDLVLIESGGDNLAATFSPELADLTLYVIDVAGGEKIPRKGGPGITRSDLLIVNKTDLAPLVGADLSVMEADTQRMRGTRPYVFASLREGHGADTVARFIVEAGGLG</sequence>
<comment type="function">
    <text evidence="1">Facilitates the functional incorporation of the urease nickel metallocenter. This process requires GTP hydrolysis, probably effectuated by UreG.</text>
</comment>
<comment type="subunit">
    <text evidence="1">Homodimer. UreD, UreF and UreG form a complex that acts as a GTP-hydrolysis-dependent molecular chaperone, activating the urease apoprotein by helping to assemble the nickel containing metallocenter of UreC. The UreE protein probably delivers the nickel.</text>
</comment>
<comment type="subcellular location">
    <subcellularLocation>
        <location evidence="1">Cytoplasm</location>
    </subcellularLocation>
</comment>
<comment type="similarity">
    <text evidence="1">Belongs to the SIMIBI class G3E GTPase family. UreG subfamily.</text>
</comment>
<dbReference type="EMBL" id="CP000908">
    <property type="protein sequence ID" value="ABY31402.1"/>
    <property type="molecule type" value="Genomic_DNA"/>
</dbReference>
<dbReference type="SMR" id="A9W6X0"/>
<dbReference type="KEGG" id="mex:Mext_3013"/>
<dbReference type="eggNOG" id="COG0378">
    <property type="taxonomic scope" value="Bacteria"/>
</dbReference>
<dbReference type="HOGENOM" id="CLU_072144_1_0_5"/>
<dbReference type="BioCyc" id="MEXT419610:MEXT_RS15170-MONOMER"/>
<dbReference type="GO" id="GO:0005737">
    <property type="term" value="C:cytoplasm"/>
    <property type="evidence" value="ECO:0007669"/>
    <property type="project" value="UniProtKB-SubCell"/>
</dbReference>
<dbReference type="GO" id="GO:0005525">
    <property type="term" value="F:GTP binding"/>
    <property type="evidence" value="ECO:0007669"/>
    <property type="project" value="UniProtKB-KW"/>
</dbReference>
<dbReference type="GO" id="GO:0003924">
    <property type="term" value="F:GTPase activity"/>
    <property type="evidence" value="ECO:0007669"/>
    <property type="project" value="InterPro"/>
</dbReference>
<dbReference type="GO" id="GO:0016151">
    <property type="term" value="F:nickel cation binding"/>
    <property type="evidence" value="ECO:0007669"/>
    <property type="project" value="UniProtKB-UniRule"/>
</dbReference>
<dbReference type="GO" id="GO:0043419">
    <property type="term" value="P:urea catabolic process"/>
    <property type="evidence" value="ECO:0007669"/>
    <property type="project" value="InterPro"/>
</dbReference>
<dbReference type="CDD" id="cd05540">
    <property type="entry name" value="UreG"/>
    <property type="match status" value="1"/>
</dbReference>
<dbReference type="FunFam" id="3.40.50.300:FF:000208">
    <property type="entry name" value="Urease accessory protein UreG"/>
    <property type="match status" value="1"/>
</dbReference>
<dbReference type="Gene3D" id="3.40.50.300">
    <property type="entry name" value="P-loop containing nucleotide triphosphate hydrolases"/>
    <property type="match status" value="1"/>
</dbReference>
<dbReference type="HAMAP" id="MF_01389">
    <property type="entry name" value="UreG"/>
    <property type="match status" value="1"/>
</dbReference>
<dbReference type="InterPro" id="IPR003495">
    <property type="entry name" value="CobW/HypB/UreG_nucleotide-bd"/>
</dbReference>
<dbReference type="InterPro" id="IPR027417">
    <property type="entry name" value="P-loop_NTPase"/>
</dbReference>
<dbReference type="InterPro" id="IPR004400">
    <property type="entry name" value="UreG"/>
</dbReference>
<dbReference type="NCBIfam" id="TIGR00101">
    <property type="entry name" value="ureG"/>
    <property type="match status" value="1"/>
</dbReference>
<dbReference type="PANTHER" id="PTHR31715">
    <property type="entry name" value="UREASE ACCESSORY PROTEIN G"/>
    <property type="match status" value="1"/>
</dbReference>
<dbReference type="PANTHER" id="PTHR31715:SF0">
    <property type="entry name" value="UREASE ACCESSORY PROTEIN G"/>
    <property type="match status" value="1"/>
</dbReference>
<dbReference type="Pfam" id="PF02492">
    <property type="entry name" value="cobW"/>
    <property type="match status" value="1"/>
</dbReference>
<dbReference type="PIRSF" id="PIRSF005624">
    <property type="entry name" value="Ni-bind_GTPase"/>
    <property type="match status" value="1"/>
</dbReference>
<dbReference type="SUPFAM" id="SSF52540">
    <property type="entry name" value="P-loop containing nucleoside triphosphate hydrolases"/>
    <property type="match status" value="1"/>
</dbReference>
<name>UREG1_METEP</name>